<dbReference type="EC" id="2.5.1.6" evidence="1"/>
<dbReference type="EMBL" id="CP000948">
    <property type="protein sequence ID" value="ACB04038.1"/>
    <property type="molecule type" value="Genomic_DNA"/>
</dbReference>
<dbReference type="RefSeq" id="WP_001062128.1">
    <property type="nucleotide sequence ID" value="NC_010473.1"/>
</dbReference>
<dbReference type="SMR" id="B1XFA4"/>
<dbReference type="GeneID" id="93779055"/>
<dbReference type="KEGG" id="ecd:ECDH10B_3117"/>
<dbReference type="HOGENOM" id="CLU_041802_1_1_6"/>
<dbReference type="UniPathway" id="UPA00315">
    <property type="reaction ID" value="UER00080"/>
</dbReference>
<dbReference type="GO" id="GO:0005737">
    <property type="term" value="C:cytoplasm"/>
    <property type="evidence" value="ECO:0007669"/>
    <property type="project" value="UniProtKB-SubCell"/>
</dbReference>
<dbReference type="GO" id="GO:0005524">
    <property type="term" value="F:ATP binding"/>
    <property type="evidence" value="ECO:0007669"/>
    <property type="project" value="UniProtKB-UniRule"/>
</dbReference>
<dbReference type="GO" id="GO:0000287">
    <property type="term" value="F:magnesium ion binding"/>
    <property type="evidence" value="ECO:0007669"/>
    <property type="project" value="UniProtKB-UniRule"/>
</dbReference>
<dbReference type="GO" id="GO:0004478">
    <property type="term" value="F:methionine adenosyltransferase activity"/>
    <property type="evidence" value="ECO:0007669"/>
    <property type="project" value="UniProtKB-UniRule"/>
</dbReference>
<dbReference type="GO" id="GO:0006730">
    <property type="term" value="P:one-carbon metabolic process"/>
    <property type="evidence" value="ECO:0007669"/>
    <property type="project" value="UniProtKB-KW"/>
</dbReference>
<dbReference type="GO" id="GO:0006556">
    <property type="term" value="P:S-adenosylmethionine biosynthetic process"/>
    <property type="evidence" value="ECO:0007669"/>
    <property type="project" value="UniProtKB-UniRule"/>
</dbReference>
<dbReference type="CDD" id="cd18079">
    <property type="entry name" value="S-AdoMet_synt"/>
    <property type="match status" value="1"/>
</dbReference>
<dbReference type="FunFam" id="3.30.300.10:FF:000001">
    <property type="entry name" value="S-adenosylmethionine synthase"/>
    <property type="match status" value="1"/>
</dbReference>
<dbReference type="FunFam" id="3.30.300.10:FF:000003">
    <property type="entry name" value="S-adenosylmethionine synthase"/>
    <property type="match status" value="1"/>
</dbReference>
<dbReference type="Gene3D" id="3.30.300.10">
    <property type="match status" value="3"/>
</dbReference>
<dbReference type="HAMAP" id="MF_00086">
    <property type="entry name" value="S_AdoMet_synth1"/>
    <property type="match status" value="1"/>
</dbReference>
<dbReference type="InterPro" id="IPR022631">
    <property type="entry name" value="ADOMET_SYNTHASE_CS"/>
</dbReference>
<dbReference type="InterPro" id="IPR022630">
    <property type="entry name" value="S-AdoMet_synt_C"/>
</dbReference>
<dbReference type="InterPro" id="IPR022629">
    <property type="entry name" value="S-AdoMet_synt_central"/>
</dbReference>
<dbReference type="InterPro" id="IPR022628">
    <property type="entry name" value="S-AdoMet_synt_N"/>
</dbReference>
<dbReference type="InterPro" id="IPR002133">
    <property type="entry name" value="S-AdoMet_synthetase"/>
</dbReference>
<dbReference type="InterPro" id="IPR022636">
    <property type="entry name" value="S-AdoMet_synthetase_sfam"/>
</dbReference>
<dbReference type="NCBIfam" id="TIGR01034">
    <property type="entry name" value="metK"/>
    <property type="match status" value="1"/>
</dbReference>
<dbReference type="PANTHER" id="PTHR11964">
    <property type="entry name" value="S-ADENOSYLMETHIONINE SYNTHETASE"/>
    <property type="match status" value="1"/>
</dbReference>
<dbReference type="Pfam" id="PF02773">
    <property type="entry name" value="S-AdoMet_synt_C"/>
    <property type="match status" value="1"/>
</dbReference>
<dbReference type="Pfam" id="PF02772">
    <property type="entry name" value="S-AdoMet_synt_M"/>
    <property type="match status" value="1"/>
</dbReference>
<dbReference type="Pfam" id="PF00438">
    <property type="entry name" value="S-AdoMet_synt_N"/>
    <property type="match status" value="1"/>
</dbReference>
<dbReference type="PIRSF" id="PIRSF000497">
    <property type="entry name" value="MAT"/>
    <property type="match status" value="1"/>
</dbReference>
<dbReference type="SUPFAM" id="SSF55973">
    <property type="entry name" value="S-adenosylmethionine synthetase"/>
    <property type="match status" value="3"/>
</dbReference>
<dbReference type="PROSITE" id="PS00376">
    <property type="entry name" value="ADOMET_SYNTHASE_1"/>
    <property type="match status" value="1"/>
</dbReference>
<dbReference type="PROSITE" id="PS00377">
    <property type="entry name" value="ADOMET_SYNTHASE_2"/>
    <property type="match status" value="1"/>
</dbReference>
<protein>
    <recommendedName>
        <fullName evidence="1">S-adenosylmethionine synthase</fullName>
        <shortName evidence="1">AdoMet synthase</shortName>
        <ecNumber evidence="1">2.5.1.6</ecNumber>
    </recommendedName>
    <alternativeName>
        <fullName evidence="1">MAT</fullName>
    </alternativeName>
    <alternativeName>
        <fullName evidence="1">Methionine adenosyltransferase</fullName>
    </alternativeName>
</protein>
<organism>
    <name type="scientific">Escherichia coli (strain K12 / DH10B)</name>
    <dbReference type="NCBI Taxonomy" id="316385"/>
    <lineage>
        <taxon>Bacteria</taxon>
        <taxon>Pseudomonadati</taxon>
        <taxon>Pseudomonadota</taxon>
        <taxon>Gammaproteobacteria</taxon>
        <taxon>Enterobacterales</taxon>
        <taxon>Enterobacteriaceae</taxon>
        <taxon>Escherichia</taxon>
    </lineage>
</organism>
<evidence type="ECO:0000255" key="1">
    <source>
        <dbReference type="HAMAP-Rule" id="MF_00086"/>
    </source>
</evidence>
<accession>B1XFA4</accession>
<keyword id="KW-0067">ATP-binding</keyword>
<keyword id="KW-0963">Cytoplasm</keyword>
<keyword id="KW-0460">Magnesium</keyword>
<keyword id="KW-0479">Metal-binding</keyword>
<keyword id="KW-0547">Nucleotide-binding</keyword>
<keyword id="KW-0554">One-carbon metabolism</keyword>
<keyword id="KW-0630">Potassium</keyword>
<keyword id="KW-0808">Transferase</keyword>
<comment type="function">
    <text evidence="1">Catalyzes the formation of S-adenosylmethionine (AdoMet) from methionine and ATP. The overall synthetic reaction is composed of two sequential steps, AdoMet formation and the subsequent tripolyphosphate hydrolysis which occurs prior to release of AdoMet from the enzyme.</text>
</comment>
<comment type="catalytic activity">
    <reaction evidence="1">
        <text>L-methionine + ATP + H2O = S-adenosyl-L-methionine + phosphate + diphosphate</text>
        <dbReference type="Rhea" id="RHEA:21080"/>
        <dbReference type="ChEBI" id="CHEBI:15377"/>
        <dbReference type="ChEBI" id="CHEBI:30616"/>
        <dbReference type="ChEBI" id="CHEBI:33019"/>
        <dbReference type="ChEBI" id="CHEBI:43474"/>
        <dbReference type="ChEBI" id="CHEBI:57844"/>
        <dbReference type="ChEBI" id="CHEBI:59789"/>
        <dbReference type="EC" id="2.5.1.6"/>
    </reaction>
</comment>
<comment type="cofactor">
    <cofactor evidence="1">
        <name>Mg(2+)</name>
        <dbReference type="ChEBI" id="CHEBI:18420"/>
    </cofactor>
    <text evidence="1">Binds 2 divalent ions per subunit.</text>
</comment>
<comment type="cofactor">
    <cofactor evidence="1">
        <name>K(+)</name>
        <dbReference type="ChEBI" id="CHEBI:29103"/>
    </cofactor>
    <text evidence="1">Binds 1 potassium ion per subunit.</text>
</comment>
<comment type="pathway">
    <text evidence="1">Amino-acid biosynthesis; S-adenosyl-L-methionine biosynthesis; S-adenosyl-L-methionine from L-methionine: step 1/1.</text>
</comment>
<comment type="subunit">
    <text evidence="1">Homotetramer; dimer of dimers.</text>
</comment>
<comment type="subcellular location">
    <subcellularLocation>
        <location evidence="1">Cytoplasm</location>
    </subcellularLocation>
</comment>
<comment type="similarity">
    <text evidence="1">Belongs to the AdoMet synthase family.</text>
</comment>
<name>METK_ECODH</name>
<sequence>MAKHLFTSESVSEGHPDKIADQISDAVLDAILEQDPKARVACETYVKTGMVLVGGEITTSAWVDIEEITRNTVREIGYVHSDMGFDANSCAVLSAIGKQSPDINQGVDRADPLEQGAGDQGLMFGYATNETDVLMPAPITYAHRLVQRQAEVRKNGTLPWLRPDAKSQVTFQYDDGKIVGIDAVVLSTQHSEEIDQKSLQEAVMEEIIKPILPAEWLTSATKFFINPTGRFVIGGPMGDCGLTGRKIIVDTYGGMARHGGGAFSGKDPSKVDRSAAYAARYVAKNIVAAGLADRCEIQVSYAIGVAEPTSIMVETFGTEKVPSEQLTLLVREFFDLRPYGLIQMLDLLHPIYKETAAYGHFGREHFPWEKTDKAQLLRDAAGLK</sequence>
<gene>
    <name evidence="1" type="primary">metK</name>
    <name type="ordered locus">ECDH10B_3117</name>
</gene>
<feature type="chain" id="PRO_1000093047" description="S-adenosylmethionine synthase">
    <location>
        <begin position="1"/>
        <end position="384"/>
    </location>
</feature>
<feature type="region of interest" description="Flexible loop" evidence="1">
    <location>
        <begin position="99"/>
        <end position="109"/>
    </location>
</feature>
<feature type="binding site" description="in other chain" evidence="1">
    <location>
        <position position="15"/>
    </location>
    <ligand>
        <name>ATP</name>
        <dbReference type="ChEBI" id="CHEBI:30616"/>
        <note>ligand shared between two neighboring subunits</note>
    </ligand>
</feature>
<feature type="binding site" evidence="1">
    <location>
        <position position="17"/>
    </location>
    <ligand>
        <name>Mg(2+)</name>
        <dbReference type="ChEBI" id="CHEBI:18420"/>
    </ligand>
</feature>
<feature type="binding site" evidence="1">
    <location>
        <position position="43"/>
    </location>
    <ligand>
        <name>K(+)</name>
        <dbReference type="ChEBI" id="CHEBI:29103"/>
    </ligand>
</feature>
<feature type="binding site" description="in other chain" evidence="1">
    <location>
        <position position="56"/>
    </location>
    <ligand>
        <name>L-methionine</name>
        <dbReference type="ChEBI" id="CHEBI:57844"/>
        <note>ligand shared between two neighboring subunits</note>
    </ligand>
</feature>
<feature type="binding site" description="in other chain" evidence="1">
    <location>
        <position position="99"/>
    </location>
    <ligand>
        <name>L-methionine</name>
        <dbReference type="ChEBI" id="CHEBI:57844"/>
        <note>ligand shared between two neighboring subunits</note>
    </ligand>
</feature>
<feature type="binding site" description="in other chain" evidence="1">
    <location>
        <begin position="164"/>
        <end position="166"/>
    </location>
    <ligand>
        <name>ATP</name>
        <dbReference type="ChEBI" id="CHEBI:30616"/>
        <note>ligand shared between two neighboring subunits</note>
    </ligand>
</feature>
<feature type="binding site" description="in other chain" evidence="1">
    <location>
        <begin position="230"/>
        <end position="231"/>
    </location>
    <ligand>
        <name>ATP</name>
        <dbReference type="ChEBI" id="CHEBI:30616"/>
        <note>ligand shared between two neighboring subunits</note>
    </ligand>
</feature>
<feature type="binding site" evidence="1">
    <location>
        <position position="239"/>
    </location>
    <ligand>
        <name>ATP</name>
        <dbReference type="ChEBI" id="CHEBI:30616"/>
        <note>ligand shared between two neighboring subunits</note>
    </ligand>
</feature>
<feature type="binding site" evidence="1">
    <location>
        <position position="239"/>
    </location>
    <ligand>
        <name>L-methionine</name>
        <dbReference type="ChEBI" id="CHEBI:57844"/>
        <note>ligand shared between two neighboring subunits</note>
    </ligand>
</feature>
<feature type="binding site" description="in other chain" evidence="1">
    <location>
        <begin position="245"/>
        <end position="246"/>
    </location>
    <ligand>
        <name>ATP</name>
        <dbReference type="ChEBI" id="CHEBI:30616"/>
        <note>ligand shared between two neighboring subunits</note>
    </ligand>
</feature>
<feature type="binding site" evidence="1">
    <location>
        <position position="262"/>
    </location>
    <ligand>
        <name>ATP</name>
        <dbReference type="ChEBI" id="CHEBI:30616"/>
        <note>ligand shared between two neighboring subunits</note>
    </ligand>
</feature>
<feature type="binding site" evidence="1">
    <location>
        <position position="266"/>
    </location>
    <ligand>
        <name>ATP</name>
        <dbReference type="ChEBI" id="CHEBI:30616"/>
        <note>ligand shared between two neighboring subunits</note>
    </ligand>
</feature>
<feature type="binding site" description="in other chain" evidence="1">
    <location>
        <position position="270"/>
    </location>
    <ligand>
        <name>L-methionine</name>
        <dbReference type="ChEBI" id="CHEBI:57844"/>
        <note>ligand shared between two neighboring subunits</note>
    </ligand>
</feature>
<reference key="1">
    <citation type="journal article" date="2008" name="J. Bacteriol.">
        <title>The complete genome sequence of Escherichia coli DH10B: insights into the biology of a laboratory workhorse.</title>
        <authorList>
            <person name="Durfee T."/>
            <person name="Nelson R."/>
            <person name="Baldwin S."/>
            <person name="Plunkett G. III"/>
            <person name="Burland V."/>
            <person name="Mau B."/>
            <person name="Petrosino J.F."/>
            <person name="Qin X."/>
            <person name="Muzny D.M."/>
            <person name="Ayele M."/>
            <person name="Gibbs R.A."/>
            <person name="Csorgo B."/>
            <person name="Posfai G."/>
            <person name="Weinstock G.M."/>
            <person name="Blattner F.R."/>
        </authorList>
    </citation>
    <scope>NUCLEOTIDE SEQUENCE [LARGE SCALE GENOMIC DNA]</scope>
    <source>
        <strain>K12 / DH10B</strain>
    </source>
</reference>
<proteinExistence type="inferred from homology"/>